<name>CYC_NIGDA</name>
<sequence>ASFBZAPAGBSASGEKIFKTKCAZCHTVBZGAGHKZGPNLHGLFGRQSGTVAGYSYSAANKNKAVNWEEKTLYDYLLNPKKYIPGTKMVFPGLKKPZZRABLLAYLKESTA</sequence>
<keyword id="KW-0007">Acetylation</keyword>
<keyword id="KW-0903">Direct protein sequencing</keyword>
<keyword id="KW-0249">Electron transport</keyword>
<keyword id="KW-0349">Heme</keyword>
<keyword id="KW-0408">Iron</keyword>
<keyword id="KW-0479">Metal-binding</keyword>
<keyword id="KW-0488">Methylation</keyword>
<keyword id="KW-0496">Mitochondrion</keyword>
<keyword id="KW-0679">Respiratory chain</keyword>
<keyword id="KW-0813">Transport</keyword>
<reference key="1">
    <citation type="journal article" date="1973" name="Biochem. J.">
        <title>The amino acid sequence of cytochrome c from Nigella damascena L. (love-in-a-mist).</title>
        <authorList>
            <person name="Brown R.H."/>
            <person name="Boulter D."/>
        </authorList>
    </citation>
    <scope>PROTEIN SEQUENCE</scope>
    <scope>ACETYLATION AT ALA-1</scope>
    <scope>METHYLATION AT LYS-80 AND LYS-94</scope>
</reference>
<feature type="chain" id="PRO_0000108302" description="Cytochrome c">
    <location>
        <begin position="1"/>
        <end position="111"/>
    </location>
</feature>
<feature type="binding site" description="covalent" evidence="1 2">
    <location>
        <position position="22"/>
    </location>
    <ligand>
        <name>heme c</name>
        <dbReference type="ChEBI" id="CHEBI:61717"/>
    </ligand>
</feature>
<feature type="binding site" description="covalent" evidence="1 2">
    <location>
        <position position="25"/>
    </location>
    <ligand>
        <name>heme c</name>
        <dbReference type="ChEBI" id="CHEBI:61717"/>
    </ligand>
</feature>
<feature type="binding site" description="axial binding residue">
    <location>
        <position position="26"/>
    </location>
    <ligand>
        <name>heme c</name>
        <dbReference type="ChEBI" id="CHEBI:61717"/>
    </ligand>
    <ligandPart>
        <name>Fe</name>
        <dbReference type="ChEBI" id="CHEBI:18248"/>
    </ligandPart>
</feature>
<feature type="binding site" description="axial binding residue">
    <location>
        <position position="88"/>
    </location>
    <ligand>
        <name>heme c</name>
        <dbReference type="ChEBI" id="CHEBI:61717"/>
    </ligand>
    <ligandPart>
        <name>Fe</name>
        <dbReference type="ChEBI" id="CHEBI:18248"/>
    </ligandPart>
</feature>
<feature type="modified residue" description="N-acetylalanine" evidence="2">
    <location>
        <position position="1"/>
    </location>
</feature>
<feature type="modified residue" description="N6,N6,N6-trimethyllysine" evidence="2">
    <location>
        <position position="80"/>
    </location>
</feature>
<feature type="modified residue" description="N6,N6,N6-trimethyllysine" evidence="2">
    <location>
        <position position="94"/>
    </location>
</feature>
<proteinExistence type="evidence at protein level"/>
<protein>
    <recommendedName>
        <fullName>Cytochrome c</fullName>
    </recommendedName>
</protein>
<organism>
    <name type="scientific">Nigella damascena</name>
    <name type="common">Love-in-a-mist</name>
    <dbReference type="NCBI Taxonomy" id="3444"/>
    <lineage>
        <taxon>Eukaryota</taxon>
        <taxon>Viridiplantae</taxon>
        <taxon>Streptophyta</taxon>
        <taxon>Embryophyta</taxon>
        <taxon>Tracheophyta</taxon>
        <taxon>Spermatophyta</taxon>
        <taxon>Magnoliopsida</taxon>
        <taxon>Ranunculales</taxon>
        <taxon>Ranunculaceae</taxon>
        <taxon>Ranunculoideae</taxon>
        <taxon>Nigelleae</taxon>
        <taxon>Nigella</taxon>
    </lineage>
</organism>
<evidence type="ECO:0000255" key="1">
    <source>
        <dbReference type="PROSITE-ProRule" id="PRU00433"/>
    </source>
</evidence>
<evidence type="ECO:0000269" key="2">
    <source>
    </source>
</evidence>
<evidence type="ECO:0000305" key="3"/>
<comment type="function">
    <text>Electron carrier protein. The oxidized form of the cytochrome c heme group can accept an electron from the heme group of the cytochrome c1 subunit of cytochrome reductase. Cytochrome c then transfers this electron to the cytochrome oxidase complex, the final protein carrier in the mitochondrial electron-transport chain.</text>
</comment>
<comment type="subcellular location">
    <subcellularLocation>
        <location>Mitochondrion intermembrane space</location>
    </subcellularLocation>
    <text>Loosely associated with the inner membrane.</text>
</comment>
<comment type="PTM">
    <text>Binds 1 heme c group covalently per subunit.</text>
</comment>
<comment type="similarity">
    <text evidence="3">Belongs to the cytochrome c family.</text>
</comment>
<comment type="online information" name="Protein Spotlight">
    <link uri="https://www.proteinspotlight.org/back_issues/076"/>
    <text>Life shuttle - Issue 76 of November 2006</text>
</comment>
<accession>P00066</accession>
<dbReference type="PIR" id="A00058">
    <property type="entry name" value="CCND"/>
</dbReference>
<dbReference type="iPTMnet" id="P00066"/>
<dbReference type="GO" id="GO:0005758">
    <property type="term" value="C:mitochondrial intermembrane space"/>
    <property type="evidence" value="ECO:0007669"/>
    <property type="project" value="UniProtKB-SubCell"/>
</dbReference>
<dbReference type="GO" id="GO:0009055">
    <property type="term" value="F:electron transfer activity"/>
    <property type="evidence" value="ECO:0007669"/>
    <property type="project" value="InterPro"/>
</dbReference>
<dbReference type="GO" id="GO:0020037">
    <property type="term" value="F:heme binding"/>
    <property type="evidence" value="ECO:0007669"/>
    <property type="project" value="InterPro"/>
</dbReference>
<dbReference type="GO" id="GO:0046872">
    <property type="term" value="F:metal ion binding"/>
    <property type="evidence" value="ECO:0007669"/>
    <property type="project" value="UniProtKB-KW"/>
</dbReference>
<dbReference type="FunFam" id="1.10.760.10:FF:000001">
    <property type="entry name" value="Cytochrome c iso-1"/>
    <property type="match status" value="1"/>
</dbReference>
<dbReference type="Gene3D" id="1.10.760.10">
    <property type="entry name" value="Cytochrome c-like domain"/>
    <property type="match status" value="1"/>
</dbReference>
<dbReference type="InterPro" id="IPR009056">
    <property type="entry name" value="Cyt_c-like_dom"/>
</dbReference>
<dbReference type="InterPro" id="IPR036909">
    <property type="entry name" value="Cyt_c-like_dom_sf"/>
</dbReference>
<dbReference type="InterPro" id="IPR002327">
    <property type="entry name" value="Cyt_c_1A/1B"/>
</dbReference>
<dbReference type="PANTHER" id="PTHR11961">
    <property type="entry name" value="CYTOCHROME C"/>
    <property type="match status" value="1"/>
</dbReference>
<dbReference type="Pfam" id="PF00034">
    <property type="entry name" value="Cytochrom_C"/>
    <property type="match status" value="1"/>
</dbReference>
<dbReference type="PRINTS" id="PR00604">
    <property type="entry name" value="CYTCHRMECIAB"/>
</dbReference>
<dbReference type="SUPFAM" id="SSF46626">
    <property type="entry name" value="Cytochrome c"/>
    <property type="match status" value="1"/>
</dbReference>
<dbReference type="PROSITE" id="PS51007">
    <property type="entry name" value="CYTC"/>
    <property type="match status" value="1"/>
</dbReference>